<dbReference type="EMBL" id="BX950851">
    <property type="protein sequence ID" value="CAG73598.1"/>
    <property type="molecule type" value="Genomic_DNA"/>
</dbReference>
<dbReference type="RefSeq" id="WP_011092299.1">
    <property type="nucleotide sequence ID" value="NC_004547.2"/>
</dbReference>
<dbReference type="SMR" id="Q6D9D2"/>
<dbReference type="STRING" id="218491.ECA0684"/>
<dbReference type="GeneID" id="57207418"/>
<dbReference type="KEGG" id="eca:ECA0684"/>
<dbReference type="PATRIC" id="fig|218491.5.peg.680"/>
<dbReference type="eggNOG" id="COG1438">
    <property type="taxonomic scope" value="Bacteria"/>
</dbReference>
<dbReference type="HOGENOM" id="CLU_097103_2_0_6"/>
<dbReference type="OrthoDB" id="7060358at2"/>
<dbReference type="UniPathway" id="UPA00068"/>
<dbReference type="Proteomes" id="UP000007966">
    <property type="component" value="Chromosome"/>
</dbReference>
<dbReference type="GO" id="GO:0005737">
    <property type="term" value="C:cytoplasm"/>
    <property type="evidence" value="ECO:0007669"/>
    <property type="project" value="UniProtKB-SubCell"/>
</dbReference>
<dbReference type="GO" id="GO:0034618">
    <property type="term" value="F:arginine binding"/>
    <property type="evidence" value="ECO:0007669"/>
    <property type="project" value="InterPro"/>
</dbReference>
<dbReference type="GO" id="GO:0003677">
    <property type="term" value="F:DNA binding"/>
    <property type="evidence" value="ECO:0007669"/>
    <property type="project" value="UniProtKB-KW"/>
</dbReference>
<dbReference type="GO" id="GO:0003700">
    <property type="term" value="F:DNA-binding transcription factor activity"/>
    <property type="evidence" value="ECO:0007669"/>
    <property type="project" value="UniProtKB-UniRule"/>
</dbReference>
<dbReference type="GO" id="GO:0006526">
    <property type="term" value="P:L-arginine biosynthetic process"/>
    <property type="evidence" value="ECO:0007669"/>
    <property type="project" value="UniProtKB-UniPathway"/>
</dbReference>
<dbReference type="GO" id="GO:0051259">
    <property type="term" value="P:protein complex oligomerization"/>
    <property type="evidence" value="ECO:0007669"/>
    <property type="project" value="InterPro"/>
</dbReference>
<dbReference type="GO" id="GO:1900079">
    <property type="term" value="P:regulation of arginine biosynthetic process"/>
    <property type="evidence" value="ECO:0007669"/>
    <property type="project" value="UniProtKB-UniRule"/>
</dbReference>
<dbReference type="FunFam" id="1.10.10.10:FF:000074">
    <property type="entry name" value="Arginine repressor"/>
    <property type="match status" value="1"/>
</dbReference>
<dbReference type="FunFam" id="3.30.1360.40:FF:000004">
    <property type="entry name" value="Arginine repressor"/>
    <property type="match status" value="1"/>
</dbReference>
<dbReference type="Gene3D" id="3.30.1360.40">
    <property type="match status" value="1"/>
</dbReference>
<dbReference type="Gene3D" id="1.10.10.10">
    <property type="entry name" value="Winged helix-like DNA-binding domain superfamily/Winged helix DNA-binding domain"/>
    <property type="match status" value="1"/>
</dbReference>
<dbReference type="HAMAP" id="MF_00173">
    <property type="entry name" value="Arg_repressor"/>
    <property type="match status" value="1"/>
</dbReference>
<dbReference type="InterPro" id="IPR001669">
    <property type="entry name" value="Arg_repress"/>
</dbReference>
<dbReference type="InterPro" id="IPR020899">
    <property type="entry name" value="Arg_repress_C"/>
</dbReference>
<dbReference type="InterPro" id="IPR036251">
    <property type="entry name" value="Arg_repress_C_sf"/>
</dbReference>
<dbReference type="InterPro" id="IPR020900">
    <property type="entry name" value="Arg_repress_DNA-bd"/>
</dbReference>
<dbReference type="InterPro" id="IPR036388">
    <property type="entry name" value="WH-like_DNA-bd_sf"/>
</dbReference>
<dbReference type="InterPro" id="IPR036390">
    <property type="entry name" value="WH_DNA-bd_sf"/>
</dbReference>
<dbReference type="NCBIfam" id="TIGR01529">
    <property type="entry name" value="argR_whole"/>
    <property type="match status" value="1"/>
</dbReference>
<dbReference type="NCBIfam" id="NF003457">
    <property type="entry name" value="PRK05066.1"/>
    <property type="match status" value="1"/>
</dbReference>
<dbReference type="PANTHER" id="PTHR34471">
    <property type="entry name" value="ARGININE REPRESSOR"/>
    <property type="match status" value="1"/>
</dbReference>
<dbReference type="PANTHER" id="PTHR34471:SF1">
    <property type="entry name" value="ARGININE REPRESSOR"/>
    <property type="match status" value="1"/>
</dbReference>
<dbReference type="Pfam" id="PF01316">
    <property type="entry name" value="Arg_repressor"/>
    <property type="match status" value="1"/>
</dbReference>
<dbReference type="Pfam" id="PF02863">
    <property type="entry name" value="Arg_repressor_C"/>
    <property type="match status" value="1"/>
</dbReference>
<dbReference type="PRINTS" id="PR01467">
    <property type="entry name" value="ARGREPRESSOR"/>
</dbReference>
<dbReference type="SUPFAM" id="SSF55252">
    <property type="entry name" value="C-terminal domain of arginine repressor"/>
    <property type="match status" value="1"/>
</dbReference>
<dbReference type="SUPFAM" id="SSF46785">
    <property type="entry name" value="Winged helix' DNA-binding domain"/>
    <property type="match status" value="1"/>
</dbReference>
<organism>
    <name type="scientific">Pectobacterium atrosepticum (strain SCRI 1043 / ATCC BAA-672)</name>
    <name type="common">Erwinia carotovora subsp. atroseptica</name>
    <dbReference type="NCBI Taxonomy" id="218491"/>
    <lineage>
        <taxon>Bacteria</taxon>
        <taxon>Pseudomonadati</taxon>
        <taxon>Pseudomonadota</taxon>
        <taxon>Gammaproteobacteria</taxon>
        <taxon>Enterobacterales</taxon>
        <taxon>Pectobacteriaceae</taxon>
        <taxon>Pectobacterium</taxon>
    </lineage>
</organism>
<feature type="chain" id="PRO_0000205090" description="Arginine repressor">
    <location>
        <begin position="1"/>
        <end position="156"/>
    </location>
</feature>
<reference key="1">
    <citation type="journal article" date="2004" name="Proc. Natl. Acad. Sci. U.S.A.">
        <title>Genome sequence of the enterobacterial phytopathogen Erwinia carotovora subsp. atroseptica and characterization of virulence factors.</title>
        <authorList>
            <person name="Bell K.S."/>
            <person name="Sebaihia M."/>
            <person name="Pritchard L."/>
            <person name="Holden M.T.G."/>
            <person name="Hyman L.J."/>
            <person name="Holeva M.C."/>
            <person name="Thomson N.R."/>
            <person name="Bentley S.D."/>
            <person name="Churcher L.J.C."/>
            <person name="Mungall K."/>
            <person name="Atkin R."/>
            <person name="Bason N."/>
            <person name="Brooks K."/>
            <person name="Chillingworth T."/>
            <person name="Clark K."/>
            <person name="Doggett J."/>
            <person name="Fraser A."/>
            <person name="Hance Z."/>
            <person name="Hauser H."/>
            <person name="Jagels K."/>
            <person name="Moule S."/>
            <person name="Norbertczak H."/>
            <person name="Ormond D."/>
            <person name="Price C."/>
            <person name="Quail M.A."/>
            <person name="Sanders M."/>
            <person name="Walker D."/>
            <person name="Whitehead S."/>
            <person name="Salmond G.P.C."/>
            <person name="Birch P.R.J."/>
            <person name="Parkhill J."/>
            <person name="Toth I.K."/>
        </authorList>
    </citation>
    <scope>NUCLEOTIDE SEQUENCE [LARGE SCALE GENOMIC DNA]</scope>
    <source>
        <strain>SCRI 1043 / ATCC BAA-672</strain>
    </source>
</reference>
<gene>
    <name evidence="1" type="primary">argR</name>
    <name type="ordered locus">ECA0684</name>
</gene>
<name>ARGR_PECAS</name>
<sequence>MRNSTKQEDLVKAFKALLKEEKFSSQSEIVHALQDEGFENINQSKVSRMLTKFGAVRTRNAKMEMVYCLPAELGVPTTSSPLKNLVLDVDYNDAVVVIHTSPGAAQLIARLLDSLGKSEGILGTIAGDDTIFTTPARGFSVKQLYEAILVLFEQEL</sequence>
<keyword id="KW-0028">Amino-acid biosynthesis</keyword>
<keyword id="KW-0055">Arginine biosynthesis</keyword>
<keyword id="KW-0963">Cytoplasm</keyword>
<keyword id="KW-0238">DNA-binding</keyword>
<keyword id="KW-1185">Reference proteome</keyword>
<keyword id="KW-0678">Repressor</keyword>
<keyword id="KW-0804">Transcription</keyword>
<keyword id="KW-0805">Transcription regulation</keyword>
<proteinExistence type="inferred from homology"/>
<protein>
    <recommendedName>
        <fullName evidence="1">Arginine repressor</fullName>
    </recommendedName>
</protein>
<comment type="function">
    <text evidence="1">Regulates arginine biosynthesis genes.</text>
</comment>
<comment type="pathway">
    <text>Amino-acid biosynthesis; L-arginine biosynthesis [regulation].</text>
</comment>
<comment type="subcellular location">
    <subcellularLocation>
        <location evidence="1">Cytoplasm</location>
    </subcellularLocation>
</comment>
<comment type="similarity">
    <text evidence="1">Belongs to the ArgR family.</text>
</comment>
<accession>Q6D9D2</accession>
<evidence type="ECO:0000255" key="1">
    <source>
        <dbReference type="HAMAP-Rule" id="MF_00173"/>
    </source>
</evidence>